<accession>Q4XZN2</accession>
<accession>A0A077XBD9</accession>
<proteinExistence type="inferred from homology"/>
<evidence type="ECO:0000255" key="1">
    <source>
        <dbReference type="HAMAP-Rule" id="MF_03015"/>
    </source>
</evidence>
<evidence type="ECO:0000256" key="2">
    <source>
        <dbReference type="SAM" id="MobiDB-lite"/>
    </source>
</evidence>
<evidence type="ECO:0000305" key="3"/>
<evidence type="ECO:0000312" key="4">
    <source>
        <dbReference type="EMBL" id="VTZ67447.1"/>
    </source>
</evidence>
<evidence type="ECO:0000312" key="5">
    <source>
        <dbReference type="Proteomes" id="UP000071118"/>
    </source>
</evidence>
<evidence type="ECO:0000312" key="6">
    <source>
        <dbReference type="Proteomes" id="UP000195489"/>
    </source>
</evidence>
<keyword id="KW-0963">Cytoplasm</keyword>
<keyword id="KW-0687">Ribonucleoprotein</keyword>
<keyword id="KW-0689">Ribosomal protein</keyword>
<dbReference type="EMBL" id="LT608171">
    <property type="protein sequence ID" value="SCL99368.1"/>
    <property type="molecule type" value="Genomic_DNA"/>
</dbReference>
<dbReference type="EMBL" id="LT608157">
    <property type="protein sequence ID" value="SCM00371.1"/>
    <property type="molecule type" value="Genomic_DNA"/>
</dbReference>
<dbReference type="EMBL" id="LK022882">
    <property type="protein sequence ID" value="VTZ67447.1"/>
    <property type="molecule type" value="Genomic_DNA"/>
</dbReference>
<dbReference type="RefSeq" id="XP_016655186.1">
    <property type="nucleotide sequence ID" value="XM_016800145.1"/>
</dbReference>
<dbReference type="SMR" id="Q4XZN2"/>
<dbReference type="EnsemblProtists" id="CDS45941">
    <property type="protein sequence ID" value="CDS45941"/>
    <property type="gene ID" value="PCHAS_051100"/>
</dbReference>
<dbReference type="GeneID" id="3496924"/>
<dbReference type="KEGG" id="pcb:PCHAS_0511000"/>
<dbReference type="VEuPathDB" id="PlasmoDB:PCHAS_0511000"/>
<dbReference type="eggNOG" id="KOG0830">
    <property type="taxonomic scope" value="Eukaryota"/>
</dbReference>
<dbReference type="HOGENOM" id="CLU_058171_2_0_1"/>
<dbReference type="OrthoDB" id="414863at2759"/>
<dbReference type="Proteomes" id="UP000071118">
    <property type="component" value="Chromosome 5"/>
</dbReference>
<dbReference type="Proteomes" id="UP000195489">
    <property type="component" value="Chromosome 5"/>
</dbReference>
<dbReference type="Proteomes" id="UP000507163">
    <property type="component" value="Chromosome 5"/>
</dbReference>
<dbReference type="GO" id="GO:0022627">
    <property type="term" value="C:cytosolic small ribosomal subunit"/>
    <property type="evidence" value="ECO:0007669"/>
    <property type="project" value="UniProtKB-UniRule"/>
</dbReference>
<dbReference type="GO" id="GO:0003735">
    <property type="term" value="F:structural constituent of ribosome"/>
    <property type="evidence" value="ECO:0007669"/>
    <property type="project" value="UniProtKB-UniRule"/>
</dbReference>
<dbReference type="GO" id="GO:0000028">
    <property type="term" value="P:ribosomal small subunit assembly"/>
    <property type="evidence" value="ECO:0007669"/>
    <property type="project" value="UniProtKB-UniRule"/>
</dbReference>
<dbReference type="GO" id="GO:0006412">
    <property type="term" value="P:translation"/>
    <property type="evidence" value="ECO:0007669"/>
    <property type="project" value="UniProtKB-UniRule"/>
</dbReference>
<dbReference type="CDD" id="cd01425">
    <property type="entry name" value="RPS2"/>
    <property type="match status" value="1"/>
</dbReference>
<dbReference type="FunFam" id="3.40.50.10490:FF:000012">
    <property type="entry name" value="40S ribosomal protein SA"/>
    <property type="match status" value="1"/>
</dbReference>
<dbReference type="Gene3D" id="3.40.50.10490">
    <property type="entry name" value="Glucose-6-phosphate isomerase like protein, domain 1"/>
    <property type="match status" value="1"/>
</dbReference>
<dbReference type="HAMAP" id="MF_03015">
    <property type="entry name" value="Ribosomal_S2_euk"/>
    <property type="match status" value="1"/>
</dbReference>
<dbReference type="InterPro" id="IPR001865">
    <property type="entry name" value="Ribosomal_uS2"/>
</dbReference>
<dbReference type="InterPro" id="IPR018130">
    <property type="entry name" value="Ribosomal_uS2_CS"/>
</dbReference>
<dbReference type="InterPro" id="IPR027498">
    <property type="entry name" value="Ribosomal_uS2_euk"/>
</dbReference>
<dbReference type="InterPro" id="IPR005707">
    <property type="entry name" value="Ribosomal_uS2_euk/arc"/>
</dbReference>
<dbReference type="InterPro" id="IPR023591">
    <property type="entry name" value="Ribosomal_uS2_flav_dom_sf"/>
</dbReference>
<dbReference type="NCBIfam" id="TIGR01012">
    <property type="entry name" value="uS2_euk_arch"/>
    <property type="match status" value="1"/>
</dbReference>
<dbReference type="PANTHER" id="PTHR11489">
    <property type="entry name" value="40S RIBOSOMAL PROTEIN SA"/>
    <property type="match status" value="1"/>
</dbReference>
<dbReference type="Pfam" id="PF00318">
    <property type="entry name" value="Ribosomal_S2"/>
    <property type="match status" value="2"/>
</dbReference>
<dbReference type="PRINTS" id="PR00395">
    <property type="entry name" value="RIBOSOMALS2"/>
</dbReference>
<dbReference type="SUPFAM" id="SSF52313">
    <property type="entry name" value="Ribosomal protein S2"/>
    <property type="match status" value="1"/>
</dbReference>
<dbReference type="PROSITE" id="PS00962">
    <property type="entry name" value="RIBOSOMAL_S2_1"/>
    <property type="match status" value="1"/>
</dbReference>
<dbReference type="PROSITE" id="PS00963">
    <property type="entry name" value="RIBOSOMAL_S2_2"/>
    <property type="match status" value="1"/>
</dbReference>
<feature type="chain" id="PRO_0000371606" description="Small ribosomal subunit protein uS2">
    <location>
        <begin position="1"/>
        <end position="263"/>
    </location>
</feature>
<feature type="region of interest" description="Disordered" evidence="2">
    <location>
        <begin position="243"/>
        <end position="263"/>
    </location>
</feature>
<gene>
    <name type="ORF">PC000391.02.0</name>
    <name evidence="4" type="ORF">PCHAS_0511000</name>
</gene>
<organism evidence="5">
    <name type="scientific">Plasmodium chabaudi chabaudi</name>
    <dbReference type="NCBI Taxonomy" id="31271"/>
    <lineage>
        <taxon>Eukaryota</taxon>
        <taxon>Sar</taxon>
        <taxon>Alveolata</taxon>
        <taxon>Apicomplexa</taxon>
        <taxon>Aconoidasida</taxon>
        <taxon>Haemosporida</taxon>
        <taxon>Plasmodiidae</taxon>
        <taxon>Plasmodium</taxon>
        <taxon>Plasmodium (Vinckeia)</taxon>
    </lineage>
</organism>
<name>RSSA_PLACU</name>
<comment type="function">
    <text evidence="1">Required for the assembly and/or stability of the 40S ribosomal subunit. Required for the processing of the 20S rRNA-precursor to mature 18S rRNA in a late step of the maturation of 40S ribosomal subunits.</text>
</comment>
<comment type="subunit">
    <text evidence="1">Component of the small ribosomal subunit. Mature ribosomes consist of a small (40S) and a large (60S) subunit. The 40S subunit contains about 33 different proteins and 1 molecule of RNA (18S). The 60S subunit contains about 49 different proteins and 3 molecules of RNA (25S, 5.8S and 5S). Interacts with ribosomal protein S21.</text>
</comment>
<comment type="subcellular location">
    <subcellularLocation>
        <location evidence="1">Cytoplasm</location>
    </subcellularLocation>
</comment>
<comment type="similarity">
    <text evidence="1">Belongs to the universal ribosomal protein uS2 family.</text>
</comment>
<sequence length="263" mass="29730">MSNKKVQSPKEESIAKMLICKVHIGTKNLENKMKRYVYTRAKDGVHIINLAKTYEKLQLAARVIVAVSNPADVVVVSARPFGSRAVLKFAQYTGAQAIAGRWTPGMLTNQIIQKFIEPRLLIVTDPRTDAQSVKESAYANIPVIALCDSDSPLEHVDIAIPCNNKGKESIALMYWLLAQEVLYLKGSIPRSQAWDVMVDMFLWRDPEQFELKNLANEEATPTAPHLADNQYATDAPYDDWNKKDDWNDNANEEWKNPIAVDEW</sequence>
<protein>
    <recommendedName>
        <fullName evidence="1">Small ribosomal subunit protein uS2</fullName>
    </recommendedName>
    <alternativeName>
        <fullName evidence="3">40S ribosomal protein SA</fullName>
    </alternativeName>
</protein>
<reference evidence="5" key="1">
    <citation type="journal article" date="2014" name="BMC Biol.">
        <title>A comprehensive evaluation of rodent malaria parasite genomes and gene expression.</title>
        <authorList>
            <person name="Otto T.D."/>
            <person name="Bohme U."/>
            <person name="Jackson A.P."/>
            <person name="Hunt M."/>
            <person name="Franke-Fayard B."/>
            <person name="Hoeijmakers W.A."/>
            <person name="Religa A.A."/>
            <person name="Robertson L."/>
            <person name="Sanders M."/>
            <person name="Ogun S.A."/>
            <person name="Cunningham D."/>
            <person name="Erhart A."/>
            <person name="Billker O."/>
            <person name="Khan S.M."/>
            <person name="Stunnenberg H.G."/>
            <person name="Langhorne J."/>
            <person name="Holder A.A."/>
            <person name="Waters A.P."/>
            <person name="Newbold C.I."/>
            <person name="Pain A."/>
            <person name="Berriman M."/>
            <person name="Janse C.J."/>
        </authorList>
    </citation>
    <scope>NUCLEOTIDE SEQUENCE [LARGE SCALE GENOMIC DNA]</scope>
    <source>
        <strain evidence="5">AS</strain>
    </source>
</reference>
<reference evidence="6" key="2">
    <citation type="submission" date="2016-08" db="EMBL/GenBank/DDBJ databases">
        <authorList>
            <consortium name="Pathogen Informatics"/>
        </authorList>
    </citation>
    <scope>NUCLEOTIDE SEQUENCE [LARGE SCALE GENOMIC DNA]</scope>
    <source>
        <strain>AJ</strain>
        <strain evidence="6">CB</strain>
    </source>
</reference>